<reference key="1">
    <citation type="journal article" date="2008" name="J. Bacteriol.">
        <title>Complete genome sequence of the mosquitocidal bacterium Bacillus sphaericus C3-41 and comparison with those of closely related Bacillus species.</title>
        <authorList>
            <person name="Hu X."/>
            <person name="Fan W."/>
            <person name="Han B."/>
            <person name="Liu H."/>
            <person name="Zheng D."/>
            <person name="Li Q."/>
            <person name="Dong W."/>
            <person name="Yan J."/>
            <person name="Gao M."/>
            <person name="Berry C."/>
            <person name="Yuan Z."/>
        </authorList>
    </citation>
    <scope>NUCLEOTIDE SEQUENCE [LARGE SCALE GENOMIC DNA]</scope>
    <source>
        <strain>C3-41</strain>
    </source>
</reference>
<comment type="function">
    <text evidence="1">The glycine cleavage system catalyzes the degradation of glycine.</text>
</comment>
<comment type="catalytic activity">
    <reaction evidence="1">
        <text>N(6)-[(R)-S(8)-aminomethyldihydrolipoyl]-L-lysyl-[protein] + (6S)-5,6,7,8-tetrahydrofolate = N(6)-[(R)-dihydrolipoyl]-L-lysyl-[protein] + (6R)-5,10-methylene-5,6,7,8-tetrahydrofolate + NH4(+)</text>
        <dbReference type="Rhea" id="RHEA:16945"/>
        <dbReference type="Rhea" id="RHEA-COMP:10475"/>
        <dbReference type="Rhea" id="RHEA-COMP:10492"/>
        <dbReference type="ChEBI" id="CHEBI:15636"/>
        <dbReference type="ChEBI" id="CHEBI:28938"/>
        <dbReference type="ChEBI" id="CHEBI:57453"/>
        <dbReference type="ChEBI" id="CHEBI:83100"/>
        <dbReference type="ChEBI" id="CHEBI:83143"/>
        <dbReference type="EC" id="2.1.2.10"/>
    </reaction>
</comment>
<comment type="subunit">
    <text evidence="1">The glycine cleavage system is composed of four proteins: P, T, L and H.</text>
</comment>
<comment type="similarity">
    <text evidence="1">Belongs to the GcvT family.</text>
</comment>
<keyword id="KW-0032">Aminotransferase</keyword>
<keyword id="KW-0808">Transferase</keyword>
<gene>
    <name evidence="1" type="primary">gcvT</name>
    <name type="ordered locus">Bsph_3609</name>
</gene>
<accession>B1HSN7</accession>
<organism>
    <name type="scientific">Lysinibacillus sphaericus (strain C3-41)</name>
    <dbReference type="NCBI Taxonomy" id="444177"/>
    <lineage>
        <taxon>Bacteria</taxon>
        <taxon>Bacillati</taxon>
        <taxon>Bacillota</taxon>
        <taxon>Bacilli</taxon>
        <taxon>Bacillales</taxon>
        <taxon>Bacillaceae</taxon>
        <taxon>Lysinibacillus</taxon>
    </lineage>
</organism>
<sequence length="367" mass="40507">MTNELKRTPLFEEYAKYGAKTVDFGGWELPVQFSSIKDEHDAVRNRAGLFDVSHMGEILVTGPDALNFLQNLLSNDVSKIATGQAQYTAMCYENGGVVDDLLTYKLADDHYLLCVNAANIEKDYDWMLENQHQYDVTIDNQSDAYAQIALQGPLAEEVLQSLTSTDVSAIKFFRFQENVEVTGHKVLVSRSGYTGEDGFELYGAPEDIKALWGKILDAGQDKGVVPAGLGCRDTLRFEAGLPLYGQELSATISPLEAGIGFAVKLNKEDFIGHDALVAQKENGLPRKLVGIEMIDKGIPRHGYKVFKDGKEIGEVTTGTQLPSSKRNVGHALIDSQFATIGNEMEIEIRGKQLKVVTVETPFYKRSK</sequence>
<protein>
    <recommendedName>
        <fullName evidence="1">Aminomethyltransferase</fullName>
        <ecNumber evidence="1">2.1.2.10</ecNumber>
    </recommendedName>
    <alternativeName>
        <fullName evidence="1">Glycine cleavage system T protein</fullName>
    </alternativeName>
</protein>
<feature type="chain" id="PRO_1000125642" description="Aminomethyltransferase">
    <location>
        <begin position="1"/>
        <end position="367"/>
    </location>
</feature>
<evidence type="ECO:0000255" key="1">
    <source>
        <dbReference type="HAMAP-Rule" id="MF_00259"/>
    </source>
</evidence>
<proteinExistence type="inferred from homology"/>
<name>GCST_LYSSC</name>
<dbReference type="EC" id="2.1.2.10" evidence="1"/>
<dbReference type="EMBL" id="CP000817">
    <property type="protein sequence ID" value="ACA41095.1"/>
    <property type="molecule type" value="Genomic_DNA"/>
</dbReference>
<dbReference type="RefSeq" id="WP_012295154.1">
    <property type="nucleotide sequence ID" value="NC_010382.1"/>
</dbReference>
<dbReference type="SMR" id="B1HSN7"/>
<dbReference type="EnsemblBacteria" id="ACA41095">
    <property type="protein sequence ID" value="ACA41095"/>
    <property type="gene ID" value="Bsph_3609"/>
</dbReference>
<dbReference type="KEGG" id="lsp:Bsph_3609"/>
<dbReference type="HOGENOM" id="CLU_007884_10_2_9"/>
<dbReference type="Proteomes" id="UP000002164">
    <property type="component" value="Chromosome"/>
</dbReference>
<dbReference type="GO" id="GO:0005829">
    <property type="term" value="C:cytosol"/>
    <property type="evidence" value="ECO:0007669"/>
    <property type="project" value="TreeGrafter"/>
</dbReference>
<dbReference type="GO" id="GO:0005960">
    <property type="term" value="C:glycine cleavage complex"/>
    <property type="evidence" value="ECO:0007669"/>
    <property type="project" value="InterPro"/>
</dbReference>
<dbReference type="GO" id="GO:0004047">
    <property type="term" value="F:aminomethyltransferase activity"/>
    <property type="evidence" value="ECO:0007669"/>
    <property type="project" value="UniProtKB-UniRule"/>
</dbReference>
<dbReference type="GO" id="GO:0008483">
    <property type="term" value="F:transaminase activity"/>
    <property type="evidence" value="ECO:0007669"/>
    <property type="project" value="UniProtKB-KW"/>
</dbReference>
<dbReference type="GO" id="GO:0019464">
    <property type="term" value="P:glycine decarboxylation via glycine cleavage system"/>
    <property type="evidence" value="ECO:0007669"/>
    <property type="project" value="UniProtKB-UniRule"/>
</dbReference>
<dbReference type="FunFam" id="2.40.30.110:FF:000003">
    <property type="entry name" value="Aminomethyltransferase"/>
    <property type="match status" value="1"/>
</dbReference>
<dbReference type="FunFam" id="3.30.70.1400:FF:000001">
    <property type="entry name" value="Aminomethyltransferase"/>
    <property type="match status" value="1"/>
</dbReference>
<dbReference type="FunFam" id="4.10.1250.10:FF:000001">
    <property type="entry name" value="Aminomethyltransferase"/>
    <property type="match status" value="1"/>
</dbReference>
<dbReference type="Gene3D" id="2.40.30.110">
    <property type="entry name" value="Aminomethyltransferase beta-barrel domains"/>
    <property type="match status" value="1"/>
</dbReference>
<dbReference type="Gene3D" id="3.30.70.1400">
    <property type="entry name" value="Aminomethyltransferase beta-barrel domains"/>
    <property type="match status" value="1"/>
</dbReference>
<dbReference type="Gene3D" id="4.10.1250.10">
    <property type="entry name" value="Aminomethyltransferase fragment"/>
    <property type="match status" value="1"/>
</dbReference>
<dbReference type="Gene3D" id="3.30.1360.120">
    <property type="entry name" value="Probable tRNA modification gtpase trme, domain 1"/>
    <property type="match status" value="1"/>
</dbReference>
<dbReference type="HAMAP" id="MF_00259">
    <property type="entry name" value="GcvT"/>
    <property type="match status" value="1"/>
</dbReference>
<dbReference type="InterPro" id="IPR006223">
    <property type="entry name" value="GCS_T"/>
</dbReference>
<dbReference type="InterPro" id="IPR022903">
    <property type="entry name" value="GCS_T_bac"/>
</dbReference>
<dbReference type="InterPro" id="IPR013977">
    <property type="entry name" value="GCST_C"/>
</dbReference>
<dbReference type="InterPro" id="IPR006222">
    <property type="entry name" value="GCV_T_N"/>
</dbReference>
<dbReference type="InterPro" id="IPR028896">
    <property type="entry name" value="GcvT/YgfZ/DmdA"/>
</dbReference>
<dbReference type="InterPro" id="IPR029043">
    <property type="entry name" value="GcvT/YgfZ_C"/>
</dbReference>
<dbReference type="InterPro" id="IPR027266">
    <property type="entry name" value="TrmE/GcvT_dom1"/>
</dbReference>
<dbReference type="NCBIfam" id="TIGR00528">
    <property type="entry name" value="gcvT"/>
    <property type="match status" value="1"/>
</dbReference>
<dbReference type="NCBIfam" id="NF001567">
    <property type="entry name" value="PRK00389.1"/>
    <property type="match status" value="1"/>
</dbReference>
<dbReference type="PANTHER" id="PTHR43757">
    <property type="entry name" value="AMINOMETHYLTRANSFERASE"/>
    <property type="match status" value="1"/>
</dbReference>
<dbReference type="PANTHER" id="PTHR43757:SF2">
    <property type="entry name" value="AMINOMETHYLTRANSFERASE, MITOCHONDRIAL"/>
    <property type="match status" value="1"/>
</dbReference>
<dbReference type="Pfam" id="PF01571">
    <property type="entry name" value="GCV_T"/>
    <property type="match status" value="1"/>
</dbReference>
<dbReference type="Pfam" id="PF08669">
    <property type="entry name" value="GCV_T_C"/>
    <property type="match status" value="1"/>
</dbReference>
<dbReference type="PIRSF" id="PIRSF006487">
    <property type="entry name" value="GcvT"/>
    <property type="match status" value="1"/>
</dbReference>
<dbReference type="SUPFAM" id="SSF101790">
    <property type="entry name" value="Aminomethyltransferase beta-barrel domain"/>
    <property type="match status" value="1"/>
</dbReference>
<dbReference type="SUPFAM" id="SSF103025">
    <property type="entry name" value="Folate-binding domain"/>
    <property type="match status" value="1"/>
</dbReference>